<gene>
    <name evidence="1" type="primary">mdh</name>
    <name type="ordered locus">plu4547</name>
</gene>
<sequence>MKVAVLGAAGGIGQALALLLKTQLPSGSELSLYDIAPVTPGVAVDLSHIPTEVKIKGFAGEDATPALEGANVVLISAGVARKPGMDRSDLFNINAGIVRNLVEQVAKTCPKSLIGIITNPVNTTVAIAAEVLKKAGVYDKNRLFGVTTLDVIRSNTFVAELKGKKPQEIEVPVIGGHSGVTILPLLSQIPGVNFTDGELAALTKRIQNAGTEVVEAKAGGGSATLSMGQAAARLGLSLVRGLQGESDVVECAYVEGDGKYARFFAQPVRLGKNGVEERLNIGELSDFEQKALEGMLDVLRKDIELGEKFINN</sequence>
<comment type="function">
    <text evidence="1">Catalyzes the reversible oxidation of malate to oxaloacetate.</text>
</comment>
<comment type="catalytic activity">
    <reaction evidence="1">
        <text>(S)-malate + NAD(+) = oxaloacetate + NADH + H(+)</text>
        <dbReference type="Rhea" id="RHEA:21432"/>
        <dbReference type="ChEBI" id="CHEBI:15378"/>
        <dbReference type="ChEBI" id="CHEBI:15589"/>
        <dbReference type="ChEBI" id="CHEBI:16452"/>
        <dbReference type="ChEBI" id="CHEBI:57540"/>
        <dbReference type="ChEBI" id="CHEBI:57945"/>
        <dbReference type="EC" id="1.1.1.37"/>
    </reaction>
</comment>
<comment type="subunit">
    <text evidence="1">Homodimer.</text>
</comment>
<comment type="similarity">
    <text evidence="1">Belongs to the LDH/MDH superfamily. MDH type 1 family.</text>
</comment>
<protein>
    <recommendedName>
        <fullName evidence="1">Malate dehydrogenase</fullName>
        <ecNumber evidence="1">1.1.1.37</ecNumber>
    </recommendedName>
</protein>
<evidence type="ECO:0000255" key="1">
    <source>
        <dbReference type="HAMAP-Rule" id="MF_01516"/>
    </source>
</evidence>
<feature type="chain" id="PRO_0000113319" description="Malate dehydrogenase">
    <location>
        <begin position="1"/>
        <end position="312"/>
    </location>
</feature>
<feature type="active site" description="Proton acceptor" evidence="1">
    <location>
        <position position="177"/>
    </location>
</feature>
<feature type="binding site" evidence="1">
    <location>
        <begin position="7"/>
        <end position="13"/>
    </location>
    <ligand>
        <name>NAD(+)</name>
        <dbReference type="ChEBI" id="CHEBI:57540"/>
    </ligand>
</feature>
<feature type="binding site" evidence="1">
    <location>
        <position position="34"/>
    </location>
    <ligand>
        <name>NAD(+)</name>
        <dbReference type="ChEBI" id="CHEBI:57540"/>
    </ligand>
</feature>
<feature type="binding site" evidence="1">
    <location>
        <position position="81"/>
    </location>
    <ligand>
        <name>substrate</name>
    </ligand>
</feature>
<feature type="binding site" evidence="1">
    <location>
        <position position="87"/>
    </location>
    <ligand>
        <name>substrate</name>
    </ligand>
</feature>
<feature type="binding site" evidence="1">
    <location>
        <position position="94"/>
    </location>
    <ligand>
        <name>NAD(+)</name>
        <dbReference type="ChEBI" id="CHEBI:57540"/>
    </ligand>
</feature>
<feature type="binding site" evidence="1">
    <location>
        <begin position="117"/>
        <end position="119"/>
    </location>
    <ligand>
        <name>NAD(+)</name>
        <dbReference type="ChEBI" id="CHEBI:57540"/>
    </ligand>
</feature>
<feature type="binding site" evidence="1">
    <location>
        <position position="119"/>
    </location>
    <ligand>
        <name>substrate</name>
    </ligand>
</feature>
<feature type="binding site" evidence="1">
    <location>
        <position position="153"/>
    </location>
    <ligand>
        <name>substrate</name>
    </ligand>
</feature>
<feature type="binding site" evidence="1">
    <location>
        <position position="227"/>
    </location>
    <ligand>
        <name>NAD(+)</name>
        <dbReference type="ChEBI" id="CHEBI:57540"/>
    </ligand>
</feature>
<accession>Q7MYW9</accession>
<name>MDH_PHOLL</name>
<dbReference type="EC" id="1.1.1.37" evidence="1"/>
<dbReference type="EMBL" id="BX571874">
    <property type="protein sequence ID" value="CAE16919.1"/>
    <property type="molecule type" value="Genomic_DNA"/>
</dbReference>
<dbReference type="RefSeq" id="WP_011148623.1">
    <property type="nucleotide sequence ID" value="NC_005126.1"/>
</dbReference>
<dbReference type="SMR" id="Q7MYW9"/>
<dbReference type="STRING" id="243265.plu4547"/>
<dbReference type="GeneID" id="48850758"/>
<dbReference type="KEGG" id="plu:plu4547"/>
<dbReference type="eggNOG" id="COG0039">
    <property type="taxonomic scope" value="Bacteria"/>
</dbReference>
<dbReference type="HOGENOM" id="CLU_047181_0_1_6"/>
<dbReference type="OrthoDB" id="9802969at2"/>
<dbReference type="Proteomes" id="UP000002514">
    <property type="component" value="Chromosome"/>
</dbReference>
<dbReference type="GO" id="GO:0005737">
    <property type="term" value="C:cytoplasm"/>
    <property type="evidence" value="ECO:0007669"/>
    <property type="project" value="TreeGrafter"/>
</dbReference>
<dbReference type="GO" id="GO:0030060">
    <property type="term" value="F:L-malate dehydrogenase (NAD+) activity"/>
    <property type="evidence" value="ECO:0007669"/>
    <property type="project" value="UniProtKB-UniRule"/>
</dbReference>
<dbReference type="GO" id="GO:0006108">
    <property type="term" value="P:malate metabolic process"/>
    <property type="evidence" value="ECO:0007669"/>
    <property type="project" value="InterPro"/>
</dbReference>
<dbReference type="GO" id="GO:0006099">
    <property type="term" value="P:tricarboxylic acid cycle"/>
    <property type="evidence" value="ECO:0007669"/>
    <property type="project" value="UniProtKB-UniRule"/>
</dbReference>
<dbReference type="CDD" id="cd01337">
    <property type="entry name" value="MDH_glyoxysomal_mitochondrial"/>
    <property type="match status" value="1"/>
</dbReference>
<dbReference type="FunFam" id="3.40.50.720:FF:000017">
    <property type="entry name" value="Malate dehydrogenase"/>
    <property type="match status" value="1"/>
</dbReference>
<dbReference type="FunFam" id="3.90.110.10:FF:000001">
    <property type="entry name" value="Malate dehydrogenase"/>
    <property type="match status" value="1"/>
</dbReference>
<dbReference type="Gene3D" id="3.90.110.10">
    <property type="entry name" value="Lactate dehydrogenase/glycoside hydrolase, family 4, C-terminal"/>
    <property type="match status" value="1"/>
</dbReference>
<dbReference type="Gene3D" id="3.40.50.720">
    <property type="entry name" value="NAD(P)-binding Rossmann-like Domain"/>
    <property type="match status" value="1"/>
</dbReference>
<dbReference type="HAMAP" id="MF_01516">
    <property type="entry name" value="Malate_dehydrog_1"/>
    <property type="match status" value="1"/>
</dbReference>
<dbReference type="InterPro" id="IPR001557">
    <property type="entry name" value="L-lactate/malate_DH"/>
</dbReference>
<dbReference type="InterPro" id="IPR022383">
    <property type="entry name" value="Lactate/malate_DH_C"/>
</dbReference>
<dbReference type="InterPro" id="IPR001236">
    <property type="entry name" value="Lactate/malate_DH_N"/>
</dbReference>
<dbReference type="InterPro" id="IPR015955">
    <property type="entry name" value="Lactate_DH/Glyco_Ohase_4_C"/>
</dbReference>
<dbReference type="InterPro" id="IPR001252">
    <property type="entry name" value="Malate_DH_AS"/>
</dbReference>
<dbReference type="InterPro" id="IPR010097">
    <property type="entry name" value="Malate_DH_type1"/>
</dbReference>
<dbReference type="InterPro" id="IPR023958">
    <property type="entry name" value="Malate_DH_type1_bac"/>
</dbReference>
<dbReference type="InterPro" id="IPR036291">
    <property type="entry name" value="NAD(P)-bd_dom_sf"/>
</dbReference>
<dbReference type="NCBIfam" id="TIGR01772">
    <property type="entry name" value="MDH_euk_gproteo"/>
    <property type="match status" value="1"/>
</dbReference>
<dbReference type="PANTHER" id="PTHR11540">
    <property type="entry name" value="MALATE AND LACTATE DEHYDROGENASE"/>
    <property type="match status" value="1"/>
</dbReference>
<dbReference type="PANTHER" id="PTHR11540:SF16">
    <property type="entry name" value="MALATE DEHYDROGENASE, MITOCHONDRIAL"/>
    <property type="match status" value="1"/>
</dbReference>
<dbReference type="Pfam" id="PF02866">
    <property type="entry name" value="Ldh_1_C"/>
    <property type="match status" value="1"/>
</dbReference>
<dbReference type="Pfam" id="PF00056">
    <property type="entry name" value="Ldh_1_N"/>
    <property type="match status" value="1"/>
</dbReference>
<dbReference type="PIRSF" id="PIRSF000102">
    <property type="entry name" value="Lac_mal_DH"/>
    <property type="match status" value="1"/>
</dbReference>
<dbReference type="SUPFAM" id="SSF56327">
    <property type="entry name" value="LDH C-terminal domain-like"/>
    <property type="match status" value="1"/>
</dbReference>
<dbReference type="SUPFAM" id="SSF51735">
    <property type="entry name" value="NAD(P)-binding Rossmann-fold domains"/>
    <property type="match status" value="1"/>
</dbReference>
<dbReference type="PROSITE" id="PS00068">
    <property type="entry name" value="MDH"/>
    <property type="match status" value="1"/>
</dbReference>
<organism>
    <name type="scientific">Photorhabdus laumondii subsp. laumondii (strain DSM 15139 / CIP 105565 / TT01)</name>
    <name type="common">Photorhabdus luminescens subsp. laumondii</name>
    <dbReference type="NCBI Taxonomy" id="243265"/>
    <lineage>
        <taxon>Bacteria</taxon>
        <taxon>Pseudomonadati</taxon>
        <taxon>Pseudomonadota</taxon>
        <taxon>Gammaproteobacteria</taxon>
        <taxon>Enterobacterales</taxon>
        <taxon>Morganellaceae</taxon>
        <taxon>Photorhabdus</taxon>
    </lineage>
</organism>
<proteinExistence type="inferred from homology"/>
<reference key="1">
    <citation type="journal article" date="2003" name="Nat. Biotechnol.">
        <title>The genome sequence of the entomopathogenic bacterium Photorhabdus luminescens.</title>
        <authorList>
            <person name="Duchaud E."/>
            <person name="Rusniok C."/>
            <person name="Frangeul L."/>
            <person name="Buchrieser C."/>
            <person name="Givaudan A."/>
            <person name="Taourit S."/>
            <person name="Bocs S."/>
            <person name="Boursaux-Eude C."/>
            <person name="Chandler M."/>
            <person name="Charles J.-F."/>
            <person name="Dassa E."/>
            <person name="Derose R."/>
            <person name="Derzelle S."/>
            <person name="Freyssinet G."/>
            <person name="Gaudriault S."/>
            <person name="Medigue C."/>
            <person name="Lanois A."/>
            <person name="Powell K."/>
            <person name="Siguier P."/>
            <person name="Vincent R."/>
            <person name="Wingate V."/>
            <person name="Zouine M."/>
            <person name="Glaser P."/>
            <person name="Boemare N."/>
            <person name="Danchin A."/>
            <person name="Kunst F."/>
        </authorList>
    </citation>
    <scope>NUCLEOTIDE SEQUENCE [LARGE SCALE GENOMIC DNA]</scope>
    <source>
        <strain>DSM 15139 / CIP 105565 / TT01</strain>
    </source>
</reference>
<keyword id="KW-0520">NAD</keyword>
<keyword id="KW-0560">Oxidoreductase</keyword>
<keyword id="KW-1185">Reference proteome</keyword>
<keyword id="KW-0816">Tricarboxylic acid cycle</keyword>